<proteinExistence type="evidence at protein level"/>
<accession>Q922J6</accession>
<accession>Q543K4</accession>
<accession>Q9D397</accession>
<gene>
    <name type="primary">Tspan2</name>
</gene>
<protein>
    <recommendedName>
        <fullName>Tetraspanin-2</fullName>
        <shortName>Tspan-2</shortName>
    </recommendedName>
</protein>
<sequence>MGRFRGGLRCIKYLLLGFNLLFWLAGSAVIAFGLWFRFGGTMKDLSSEDKSPEYFYVGLYVLVGAGALMMTVGFFGCCGAMRESQCVLGSFFTCLLVIFAAEVTTGVFAFIGKDVAIRHVQSMYEEAYSDYLKDRARGNGTLITFHSAFQCCGKESSEQVQPTCPKELPGHKNCIDKIETVISAKLQLIGIVGIGIAGLTIFGMIFSMVLCCAIRNSRDVI</sequence>
<comment type="function">
    <text evidence="1">May play a role in signalling in oligodendrocytes in the early stages of their terminal differentiation into myelin-forming glia and may also function in stabilizing the mature sheath.</text>
</comment>
<comment type="subcellular location">
    <subcellularLocation>
        <location evidence="3">Membrane</location>
        <topology evidence="3">Multi-pass membrane protein</topology>
    </subcellularLocation>
</comment>
<comment type="similarity">
    <text evidence="3">Belongs to the tetraspanin (TM4SF) family.</text>
</comment>
<keyword id="KW-0903">Direct protein sequencing</keyword>
<keyword id="KW-0325">Glycoprotein</keyword>
<keyword id="KW-0472">Membrane</keyword>
<keyword id="KW-1185">Reference proteome</keyword>
<keyword id="KW-0812">Transmembrane</keyword>
<keyword id="KW-1133">Transmembrane helix</keyword>
<dbReference type="EMBL" id="AK018178">
    <property type="protein sequence ID" value="BAB31109.1"/>
    <property type="molecule type" value="mRNA"/>
</dbReference>
<dbReference type="EMBL" id="AK032520">
    <property type="protein sequence ID" value="BAC27907.1"/>
    <property type="molecule type" value="mRNA"/>
</dbReference>
<dbReference type="EMBL" id="AK049888">
    <property type="protein sequence ID" value="BAC33972.1"/>
    <property type="molecule type" value="mRNA"/>
</dbReference>
<dbReference type="EMBL" id="AK079560">
    <property type="protein sequence ID" value="BAC37684.1"/>
    <property type="molecule type" value="mRNA"/>
</dbReference>
<dbReference type="EMBL" id="BC007185">
    <property type="protein sequence ID" value="AAH07185.1"/>
    <property type="molecule type" value="mRNA"/>
</dbReference>
<dbReference type="CCDS" id="CCDS17688.1"/>
<dbReference type="RefSeq" id="NP_081809.2">
    <property type="nucleotide sequence ID" value="NM_027533.3"/>
</dbReference>
<dbReference type="SMR" id="Q922J6"/>
<dbReference type="BioGRID" id="214232">
    <property type="interactions" value="1"/>
</dbReference>
<dbReference type="FunCoup" id="Q922J6">
    <property type="interactions" value="175"/>
</dbReference>
<dbReference type="STRING" id="10090.ENSMUSP00000029451"/>
<dbReference type="GlyConnect" id="2760">
    <property type="glycosylation" value="13 N-Linked glycans (1 site)"/>
</dbReference>
<dbReference type="GlyCosmos" id="Q922J6">
    <property type="glycosylation" value="1 site, 13 glycans"/>
</dbReference>
<dbReference type="GlyGen" id="Q922J6">
    <property type="glycosylation" value="2 sites, 14 N-linked glycans (1 site), 1 O-linked glycan (1 site)"/>
</dbReference>
<dbReference type="iPTMnet" id="Q922J6"/>
<dbReference type="PhosphoSitePlus" id="Q922J6"/>
<dbReference type="SwissPalm" id="Q922J6"/>
<dbReference type="PaxDb" id="10090-ENSMUSP00000029451"/>
<dbReference type="ProteomicsDB" id="297986"/>
<dbReference type="Antibodypedia" id="2866">
    <property type="antibodies" value="241 antibodies from 25 providers"/>
</dbReference>
<dbReference type="DNASU" id="70747"/>
<dbReference type="Ensembl" id="ENSMUST00000029451.12">
    <property type="protein sequence ID" value="ENSMUSP00000029451.6"/>
    <property type="gene ID" value="ENSMUSG00000027858.14"/>
</dbReference>
<dbReference type="GeneID" id="70747"/>
<dbReference type="KEGG" id="mmu:70747"/>
<dbReference type="UCSC" id="uc008qrw.2">
    <property type="organism name" value="mouse"/>
</dbReference>
<dbReference type="AGR" id="MGI:1917997"/>
<dbReference type="CTD" id="10100"/>
<dbReference type="MGI" id="MGI:1917997">
    <property type="gene designation" value="Tspan2"/>
</dbReference>
<dbReference type="VEuPathDB" id="HostDB:ENSMUSG00000027858"/>
<dbReference type="eggNOG" id="KOG3882">
    <property type="taxonomic scope" value="Eukaryota"/>
</dbReference>
<dbReference type="GeneTree" id="ENSGT00940000157504"/>
<dbReference type="HOGENOM" id="CLU_055524_10_1_1"/>
<dbReference type="InParanoid" id="Q922J6"/>
<dbReference type="OMA" id="EYMKNPG"/>
<dbReference type="OrthoDB" id="5870230at2759"/>
<dbReference type="PhylomeDB" id="Q922J6"/>
<dbReference type="TreeFam" id="TF352895"/>
<dbReference type="BioGRID-ORCS" id="70747">
    <property type="hits" value="2 hits in 76 CRISPR screens"/>
</dbReference>
<dbReference type="ChiTaRS" id="Tspan2">
    <property type="organism name" value="mouse"/>
</dbReference>
<dbReference type="PRO" id="PR:Q922J6"/>
<dbReference type="Proteomes" id="UP000000589">
    <property type="component" value="Chromosome 3"/>
</dbReference>
<dbReference type="RNAct" id="Q922J6">
    <property type="molecule type" value="protein"/>
</dbReference>
<dbReference type="Bgee" id="ENSMUSG00000027858">
    <property type="expression patterns" value="Expressed in ventral tegmental area and 223 other cell types or tissues"/>
</dbReference>
<dbReference type="ExpressionAtlas" id="Q922J6">
    <property type="expression patterns" value="baseline and differential"/>
</dbReference>
<dbReference type="GO" id="GO:0043209">
    <property type="term" value="C:myelin sheath"/>
    <property type="evidence" value="ECO:0000314"/>
    <property type="project" value="MGI"/>
</dbReference>
<dbReference type="GO" id="GO:0005654">
    <property type="term" value="C:nucleoplasm"/>
    <property type="evidence" value="ECO:0007669"/>
    <property type="project" value="Ensembl"/>
</dbReference>
<dbReference type="GO" id="GO:0005886">
    <property type="term" value="C:plasma membrane"/>
    <property type="evidence" value="ECO:0000314"/>
    <property type="project" value="MGI"/>
</dbReference>
<dbReference type="GO" id="GO:0014002">
    <property type="term" value="P:astrocyte development"/>
    <property type="evidence" value="ECO:0000315"/>
    <property type="project" value="MGI"/>
</dbReference>
<dbReference type="GO" id="GO:0061564">
    <property type="term" value="P:axon development"/>
    <property type="evidence" value="ECO:0000316"/>
    <property type="project" value="MGI"/>
</dbReference>
<dbReference type="GO" id="GO:0006954">
    <property type="term" value="P:inflammatory response"/>
    <property type="evidence" value="ECO:0000316"/>
    <property type="project" value="MGI"/>
</dbReference>
<dbReference type="GO" id="GO:0014005">
    <property type="term" value="P:microglia development"/>
    <property type="evidence" value="ECO:0000315"/>
    <property type="project" value="MGI"/>
</dbReference>
<dbReference type="GO" id="GO:0042552">
    <property type="term" value="P:myelination"/>
    <property type="evidence" value="ECO:0000316"/>
    <property type="project" value="MGI"/>
</dbReference>
<dbReference type="GO" id="GO:0048709">
    <property type="term" value="P:oligodendrocyte differentiation"/>
    <property type="evidence" value="ECO:0000315"/>
    <property type="project" value="MGI"/>
</dbReference>
<dbReference type="CDD" id="cd03151">
    <property type="entry name" value="CD81_like_LEL"/>
    <property type="match status" value="1"/>
</dbReference>
<dbReference type="FunFam" id="1.10.1450.10:FF:000015">
    <property type="entry name" value="Tetraspanin"/>
    <property type="match status" value="1"/>
</dbReference>
<dbReference type="Gene3D" id="1.10.1450.10">
    <property type="entry name" value="Tetraspanin"/>
    <property type="match status" value="1"/>
</dbReference>
<dbReference type="InterPro" id="IPR018499">
    <property type="entry name" value="Tetraspanin/Peripherin"/>
</dbReference>
<dbReference type="InterPro" id="IPR000301">
    <property type="entry name" value="Tetraspanin_animals"/>
</dbReference>
<dbReference type="InterPro" id="IPR018503">
    <property type="entry name" value="Tetraspanin_CS"/>
</dbReference>
<dbReference type="InterPro" id="IPR008952">
    <property type="entry name" value="Tetraspanin_EC2_sf"/>
</dbReference>
<dbReference type="PANTHER" id="PTHR19282">
    <property type="entry name" value="TETRASPANIN"/>
    <property type="match status" value="1"/>
</dbReference>
<dbReference type="PANTHER" id="PTHR19282:SF155">
    <property type="entry name" value="TETRASPANIN-2"/>
    <property type="match status" value="1"/>
</dbReference>
<dbReference type="Pfam" id="PF00335">
    <property type="entry name" value="Tetraspanin"/>
    <property type="match status" value="1"/>
</dbReference>
<dbReference type="PIRSF" id="PIRSF002419">
    <property type="entry name" value="Tetraspanin"/>
    <property type="match status" value="1"/>
</dbReference>
<dbReference type="PRINTS" id="PR00259">
    <property type="entry name" value="TMFOUR"/>
</dbReference>
<dbReference type="SUPFAM" id="SSF48652">
    <property type="entry name" value="Tetraspanin"/>
    <property type="match status" value="1"/>
</dbReference>
<dbReference type="PROSITE" id="PS00421">
    <property type="entry name" value="TM4_1"/>
    <property type="match status" value="1"/>
</dbReference>
<evidence type="ECO:0000250" key="1"/>
<evidence type="ECO:0000255" key="2"/>
<evidence type="ECO:0000305" key="3"/>
<reference key="1">
    <citation type="journal article" date="2005" name="Science">
        <title>The transcriptional landscape of the mammalian genome.</title>
        <authorList>
            <person name="Carninci P."/>
            <person name="Kasukawa T."/>
            <person name="Katayama S."/>
            <person name="Gough J."/>
            <person name="Frith M.C."/>
            <person name="Maeda N."/>
            <person name="Oyama R."/>
            <person name="Ravasi T."/>
            <person name="Lenhard B."/>
            <person name="Wells C."/>
            <person name="Kodzius R."/>
            <person name="Shimokawa K."/>
            <person name="Bajic V.B."/>
            <person name="Brenner S.E."/>
            <person name="Batalov S."/>
            <person name="Forrest A.R."/>
            <person name="Zavolan M."/>
            <person name="Davis M.J."/>
            <person name="Wilming L.G."/>
            <person name="Aidinis V."/>
            <person name="Allen J.E."/>
            <person name="Ambesi-Impiombato A."/>
            <person name="Apweiler R."/>
            <person name="Aturaliya R.N."/>
            <person name="Bailey T.L."/>
            <person name="Bansal M."/>
            <person name="Baxter L."/>
            <person name="Beisel K.W."/>
            <person name="Bersano T."/>
            <person name="Bono H."/>
            <person name="Chalk A.M."/>
            <person name="Chiu K.P."/>
            <person name="Choudhary V."/>
            <person name="Christoffels A."/>
            <person name="Clutterbuck D.R."/>
            <person name="Crowe M.L."/>
            <person name="Dalla E."/>
            <person name="Dalrymple B.P."/>
            <person name="de Bono B."/>
            <person name="Della Gatta G."/>
            <person name="di Bernardo D."/>
            <person name="Down T."/>
            <person name="Engstrom P."/>
            <person name="Fagiolini M."/>
            <person name="Faulkner G."/>
            <person name="Fletcher C.F."/>
            <person name="Fukushima T."/>
            <person name="Furuno M."/>
            <person name="Futaki S."/>
            <person name="Gariboldi M."/>
            <person name="Georgii-Hemming P."/>
            <person name="Gingeras T.R."/>
            <person name="Gojobori T."/>
            <person name="Green R.E."/>
            <person name="Gustincich S."/>
            <person name="Harbers M."/>
            <person name="Hayashi Y."/>
            <person name="Hensch T.K."/>
            <person name="Hirokawa N."/>
            <person name="Hill D."/>
            <person name="Huminiecki L."/>
            <person name="Iacono M."/>
            <person name="Ikeo K."/>
            <person name="Iwama A."/>
            <person name="Ishikawa T."/>
            <person name="Jakt M."/>
            <person name="Kanapin A."/>
            <person name="Katoh M."/>
            <person name="Kawasawa Y."/>
            <person name="Kelso J."/>
            <person name="Kitamura H."/>
            <person name="Kitano H."/>
            <person name="Kollias G."/>
            <person name="Krishnan S.P."/>
            <person name="Kruger A."/>
            <person name="Kummerfeld S.K."/>
            <person name="Kurochkin I.V."/>
            <person name="Lareau L.F."/>
            <person name="Lazarevic D."/>
            <person name="Lipovich L."/>
            <person name="Liu J."/>
            <person name="Liuni S."/>
            <person name="McWilliam S."/>
            <person name="Madan Babu M."/>
            <person name="Madera M."/>
            <person name="Marchionni L."/>
            <person name="Matsuda H."/>
            <person name="Matsuzawa S."/>
            <person name="Miki H."/>
            <person name="Mignone F."/>
            <person name="Miyake S."/>
            <person name="Morris K."/>
            <person name="Mottagui-Tabar S."/>
            <person name="Mulder N."/>
            <person name="Nakano N."/>
            <person name="Nakauchi H."/>
            <person name="Ng P."/>
            <person name="Nilsson R."/>
            <person name="Nishiguchi S."/>
            <person name="Nishikawa S."/>
            <person name="Nori F."/>
            <person name="Ohara O."/>
            <person name="Okazaki Y."/>
            <person name="Orlando V."/>
            <person name="Pang K.C."/>
            <person name="Pavan W.J."/>
            <person name="Pavesi G."/>
            <person name="Pesole G."/>
            <person name="Petrovsky N."/>
            <person name="Piazza S."/>
            <person name="Reed J."/>
            <person name="Reid J.F."/>
            <person name="Ring B.Z."/>
            <person name="Ringwald M."/>
            <person name="Rost B."/>
            <person name="Ruan Y."/>
            <person name="Salzberg S.L."/>
            <person name="Sandelin A."/>
            <person name="Schneider C."/>
            <person name="Schoenbach C."/>
            <person name="Sekiguchi K."/>
            <person name="Semple C.A."/>
            <person name="Seno S."/>
            <person name="Sessa L."/>
            <person name="Sheng Y."/>
            <person name="Shibata Y."/>
            <person name="Shimada H."/>
            <person name="Shimada K."/>
            <person name="Silva D."/>
            <person name="Sinclair B."/>
            <person name="Sperling S."/>
            <person name="Stupka E."/>
            <person name="Sugiura K."/>
            <person name="Sultana R."/>
            <person name="Takenaka Y."/>
            <person name="Taki K."/>
            <person name="Tammoja K."/>
            <person name="Tan S.L."/>
            <person name="Tang S."/>
            <person name="Taylor M.S."/>
            <person name="Tegner J."/>
            <person name="Teichmann S.A."/>
            <person name="Ueda H.R."/>
            <person name="van Nimwegen E."/>
            <person name="Verardo R."/>
            <person name="Wei C.L."/>
            <person name="Yagi K."/>
            <person name="Yamanishi H."/>
            <person name="Zabarovsky E."/>
            <person name="Zhu S."/>
            <person name="Zimmer A."/>
            <person name="Hide W."/>
            <person name="Bult C."/>
            <person name="Grimmond S.M."/>
            <person name="Teasdale R.D."/>
            <person name="Liu E.T."/>
            <person name="Brusic V."/>
            <person name="Quackenbush J."/>
            <person name="Wahlestedt C."/>
            <person name="Mattick J.S."/>
            <person name="Hume D.A."/>
            <person name="Kai C."/>
            <person name="Sasaki D."/>
            <person name="Tomaru Y."/>
            <person name="Fukuda S."/>
            <person name="Kanamori-Katayama M."/>
            <person name="Suzuki M."/>
            <person name="Aoki J."/>
            <person name="Arakawa T."/>
            <person name="Iida J."/>
            <person name="Imamura K."/>
            <person name="Itoh M."/>
            <person name="Kato T."/>
            <person name="Kawaji H."/>
            <person name="Kawagashira N."/>
            <person name="Kawashima T."/>
            <person name="Kojima M."/>
            <person name="Kondo S."/>
            <person name="Konno H."/>
            <person name="Nakano K."/>
            <person name="Ninomiya N."/>
            <person name="Nishio T."/>
            <person name="Okada M."/>
            <person name="Plessy C."/>
            <person name="Shibata K."/>
            <person name="Shiraki T."/>
            <person name="Suzuki S."/>
            <person name="Tagami M."/>
            <person name="Waki K."/>
            <person name="Watahiki A."/>
            <person name="Okamura-Oho Y."/>
            <person name="Suzuki H."/>
            <person name="Kawai J."/>
            <person name="Hayashizaki Y."/>
        </authorList>
    </citation>
    <scope>NUCLEOTIDE SEQUENCE [LARGE SCALE MRNA]</scope>
    <source>
        <strain>C57BL/6J</strain>
        <tissue>Hypothalamus</tissue>
        <tissue>Medulla oblongata</tissue>
    </source>
</reference>
<reference key="2">
    <citation type="journal article" date="2004" name="Genome Res.">
        <title>The status, quality, and expansion of the NIH full-length cDNA project: the Mammalian Gene Collection (MGC).</title>
        <authorList>
            <consortium name="The MGC Project Team"/>
        </authorList>
    </citation>
    <scope>NUCLEOTIDE SEQUENCE [LARGE SCALE MRNA]</scope>
</reference>
<reference key="3">
    <citation type="submission" date="2007-04" db="UniProtKB">
        <authorList>
            <person name="Lubec G."/>
            <person name="Kang S.U."/>
        </authorList>
    </citation>
    <scope>PROTEIN SEQUENCE OF 155-166</scope>
    <scope>IDENTIFICATION BY MASS SPECTROMETRY</scope>
    <source>
        <strain>C57BL/6J</strain>
        <tissue>Brain</tissue>
    </source>
</reference>
<reference key="4">
    <citation type="journal article" date="2010" name="Cell">
        <title>A tissue-specific atlas of mouse protein phosphorylation and expression.</title>
        <authorList>
            <person name="Huttlin E.L."/>
            <person name="Jedrychowski M.P."/>
            <person name="Elias J.E."/>
            <person name="Goswami T."/>
            <person name="Rad R."/>
            <person name="Beausoleil S.A."/>
            <person name="Villen J."/>
            <person name="Haas W."/>
            <person name="Sowa M.E."/>
            <person name="Gygi S.P."/>
        </authorList>
    </citation>
    <scope>IDENTIFICATION BY MASS SPECTROMETRY [LARGE SCALE ANALYSIS]</scope>
    <source>
        <tissue>Brain</tissue>
    </source>
</reference>
<feature type="chain" id="PRO_0000219237" description="Tetraspanin-2">
    <location>
        <begin position="1"/>
        <end position="221"/>
    </location>
</feature>
<feature type="topological domain" description="Cytoplasmic" evidence="2">
    <location>
        <begin position="1"/>
        <end position="13"/>
    </location>
</feature>
<feature type="transmembrane region" description="Helical" evidence="2">
    <location>
        <begin position="14"/>
        <end position="34"/>
    </location>
</feature>
<feature type="topological domain" description="Extracellular" evidence="2">
    <location>
        <begin position="35"/>
        <end position="54"/>
    </location>
</feature>
<feature type="transmembrane region" description="Helical" evidence="2">
    <location>
        <begin position="55"/>
        <end position="75"/>
    </location>
</feature>
<feature type="topological domain" description="Cytoplasmic" evidence="2">
    <location>
        <begin position="76"/>
        <end position="90"/>
    </location>
</feature>
<feature type="transmembrane region" description="Helical" evidence="2">
    <location>
        <begin position="91"/>
        <end position="111"/>
    </location>
</feature>
<feature type="topological domain" description="Extracellular" evidence="2">
    <location>
        <begin position="112"/>
        <end position="188"/>
    </location>
</feature>
<feature type="transmembrane region" description="Helical" evidence="2">
    <location>
        <begin position="189"/>
        <end position="209"/>
    </location>
</feature>
<feature type="topological domain" description="Cytoplasmic" evidence="2">
    <location>
        <begin position="210"/>
        <end position="221"/>
    </location>
</feature>
<feature type="glycosylation site" description="N-linked (GlcNAc...) asparagine" evidence="2">
    <location>
        <position position="139"/>
    </location>
</feature>
<feature type="sequence conflict" description="In Ref. 1; BAB31109." evidence="3" ref="1">
    <original>L</original>
    <variation>M</variation>
    <location>
        <position position="68"/>
    </location>
</feature>
<name>TSN2_MOUSE</name>
<organism>
    <name type="scientific">Mus musculus</name>
    <name type="common">Mouse</name>
    <dbReference type="NCBI Taxonomy" id="10090"/>
    <lineage>
        <taxon>Eukaryota</taxon>
        <taxon>Metazoa</taxon>
        <taxon>Chordata</taxon>
        <taxon>Craniata</taxon>
        <taxon>Vertebrata</taxon>
        <taxon>Euteleostomi</taxon>
        <taxon>Mammalia</taxon>
        <taxon>Eutheria</taxon>
        <taxon>Euarchontoglires</taxon>
        <taxon>Glires</taxon>
        <taxon>Rodentia</taxon>
        <taxon>Myomorpha</taxon>
        <taxon>Muroidea</taxon>
        <taxon>Muridae</taxon>
        <taxon>Murinae</taxon>
        <taxon>Mus</taxon>
        <taxon>Mus</taxon>
    </lineage>
</organism>